<protein>
    <recommendedName>
        <fullName evidence="1">Large ribosomal subunit protein bL36A</fullName>
    </recommendedName>
    <alternativeName>
        <fullName evidence="2">50S ribosomal protein L36 1</fullName>
    </alternativeName>
</protein>
<feature type="chain" id="PRO_0000126191" description="Large ribosomal subunit protein bL36A">
    <location>
        <begin position="1"/>
        <end position="37"/>
    </location>
</feature>
<keyword id="KW-1185">Reference proteome</keyword>
<keyword id="KW-0687">Ribonucleoprotein</keyword>
<keyword id="KW-0689">Ribosomal protein</keyword>
<sequence length="37" mass="4279">MKVRASVKKLCRNCKVVKREGVVRVICTDPKHKQRQG</sequence>
<accession>Q7VKF4</accession>
<dbReference type="EMBL" id="AE017143">
    <property type="protein sequence ID" value="AAP96675.1"/>
    <property type="molecule type" value="Genomic_DNA"/>
</dbReference>
<dbReference type="RefSeq" id="WP_010945701.1">
    <property type="nucleotide sequence ID" value="NC_002940.2"/>
</dbReference>
<dbReference type="SMR" id="Q7VKF4"/>
<dbReference type="STRING" id="233412.HD_1955"/>
<dbReference type="GeneID" id="60733564"/>
<dbReference type="KEGG" id="hdu:HD_1955"/>
<dbReference type="eggNOG" id="COG0257">
    <property type="taxonomic scope" value="Bacteria"/>
</dbReference>
<dbReference type="HOGENOM" id="CLU_135723_6_2_6"/>
<dbReference type="OrthoDB" id="9802520at2"/>
<dbReference type="Proteomes" id="UP000001022">
    <property type="component" value="Chromosome"/>
</dbReference>
<dbReference type="GO" id="GO:0005737">
    <property type="term" value="C:cytoplasm"/>
    <property type="evidence" value="ECO:0007669"/>
    <property type="project" value="UniProtKB-ARBA"/>
</dbReference>
<dbReference type="GO" id="GO:1990904">
    <property type="term" value="C:ribonucleoprotein complex"/>
    <property type="evidence" value="ECO:0007669"/>
    <property type="project" value="UniProtKB-KW"/>
</dbReference>
<dbReference type="GO" id="GO:0005840">
    <property type="term" value="C:ribosome"/>
    <property type="evidence" value="ECO:0007669"/>
    <property type="project" value="UniProtKB-KW"/>
</dbReference>
<dbReference type="GO" id="GO:0003735">
    <property type="term" value="F:structural constituent of ribosome"/>
    <property type="evidence" value="ECO:0007669"/>
    <property type="project" value="InterPro"/>
</dbReference>
<dbReference type="GO" id="GO:0006412">
    <property type="term" value="P:translation"/>
    <property type="evidence" value="ECO:0007669"/>
    <property type="project" value="UniProtKB-UniRule"/>
</dbReference>
<dbReference type="HAMAP" id="MF_00251">
    <property type="entry name" value="Ribosomal_bL36"/>
    <property type="match status" value="1"/>
</dbReference>
<dbReference type="InterPro" id="IPR000473">
    <property type="entry name" value="Ribosomal_bL36"/>
</dbReference>
<dbReference type="InterPro" id="IPR035977">
    <property type="entry name" value="Ribosomal_bL36_sp"/>
</dbReference>
<dbReference type="NCBIfam" id="TIGR01022">
    <property type="entry name" value="rpmJ_bact"/>
    <property type="match status" value="1"/>
</dbReference>
<dbReference type="PANTHER" id="PTHR42888">
    <property type="entry name" value="50S RIBOSOMAL PROTEIN L36, CHLOROPLASTIC"/>
    <property type="match status" value="1"/>
</dbReference>
<dbReference type="PANTHER" id="PTHR42888:SF1">
    <property type="entry name" value="LARGE RIBOSOMAL SUBUNIT PROTEIN BL36C"/>
    <property type="match status" value="1"/>
</dbReference>
<dbReference type="Pfam" id="PF00444">
    <property type="entry name" value="Ribosomal_L36"/>
    <property type="match status" value="1"/>
</dbReference>
<dbReference type="SUPFAM" id="SSF57840">
    <property type="entry name" value="Ribosomal protein L36"/>
    <property type="match status" value="1"/>
</dbReference>
<dbReference type="PROSITE" id="PS00828">
    <property type="entry name" value="RIBOSOMAL_L36"/>
    <property type="match status" value="1"/>
</dbReference>
<proteinExistence type="inferred from homology"/>
<organism>
    <name type="scientific">Haemophilus ducreyi (strain 35000HP / ATCC 700724)</name>
    <dbReference type="NCBI Taxonomy" id="233412"/>
    <lineage>
        <taxon>Bacteria</taxon>
        <taxon>Pseudomonadati</taxon>
        <taxon>Pseudomonadota</taxon>
        <taxon>Gammaproteobacteria</taxon>
        <taxon>Pasteurellales</taxon>
        <taxon>Pasteurellaceae</taxon>
        <taxon>Haemophilus</taxon>
    </lineage>
</organism>
<gene>
    <name evidence="1" type="primary">rpmJ1</name>
    <name type="synonym">rpmJ</name>
    <name type="ordered locus">HD_1955</name>
</gene>
<reference key="1">
    <citation type="submission" date="2003-06" db="EMBL/GenBank/DDBJ databases">
        <title>The complete genome sequence of Haemophilus ducreyi.</title>
        <authorList>
            <person name="Munson R.S. Jr."/>
            <person name="Ray W.C."/>
            <person name="Mahairas G."/>
            <person name="Sabo P."/>
            <person name="Mungur R."/>
            <person name="Johnson L."/>
            <person name="Nguyen D."/>
            <person name="Wang J."/>
            <person name="Forst C."/>
            <person name="Hood L."/>
        </authorList>
    </citation>
    <scope>NUCLEOTIDE SEQUENCE [LARGE SCALE GENOMIC DNA]</scope>
    <source>
        <strain>35000HP / ATCC 700724</strain>
    </source>
</reference>
<comment type="similarity">
    <text evidence="1">Belongs to the bacterial ribosomal protein bL36 family.</text>
</comment>
<name>RL361_HAEDU</name>
<evidence type="ECO:0000255" key="1">
    <source>
        <dbReference type="HAMAP-Rule" id="MF_00251"/>
    </source>
</evidence>
<evidence type="ECO:0000305" key="2"/>